<sequence length="126" mass="13344">MSKVPINSSKLSCGGPYNQAVKSGGLIFCSGQAAVKDGNFVPGTIQEQTRLTIENLAEVLRVAGSSLEKLVKVNIFLTDIDDFAAMNEVYKEMLPDPMPARTTVAAGKIPLSSKGGKIEIECIAAE</sequence>
<evidence type="ECO:0000250" key="1"/>
<evidence type="ECO:0000305" key="2"/>
<proteinExistence type="inferred from homology"/>
<name>MMF2_SCHPO</name>
<keyword id="KW-0963">Cytoplasm</keyword>
<keyword id="KW-0496">Mitochondrion</keyword>
<keyword id="KW-1185">Reference proteome</keyword>
<keyword id="KW-0809">Transit peptide</keyword>
<comment type="function">
    <text evidence="1">Plays a role in the maintenance of mitochondrial DNA.</text>
</comment>
<comment type="subcellular location">
    <subcellularLocation>
        <location evidence="1">Mitochondrion</location>
    </subcellularLocation>
    <subcellularLocation>
        <location evidence="1">Cytoplasm</location>
    </subcellularLocation>
</comment>
<comment type="similarity">
    <text evidence="2">Belongs to the RutC family.</text>
</comment>
<protein>
    <recommendedName>
        <fullName>Protein mmf2, mitochondrial</fullName>
    </recommendedName>
    <alternativeName>
        <fullName>Maintenance of mitochondrial function 2</fullName>
    </alternativeName>
</protein>
<gene>
    <name type="primary">mmf2</name>
    <name type="synonym">hpm1</name>
    <name type="ORF">SPAC1039.10</name>
    <name type="ORF">SPAC922.01</name>
</gene>
<feature type="transit peptide" description="Mitochondrion">
    <location>
        <begin position="1"/>
        <end status="unknown"/>
    </location>
</feature>
<feature type="chain" id="PRO_0000036211" description="Protein mmf2, mitochondrial">
    <location>
        <begin status="unknown"/>
        <end position="126"/>
    </location>
</feature>
<reference key="1">
    <citation type="journal article" date="2002" name="Nature">
        <title>The genome sequence of Schizosaccharomyces pombe.</title>
        <authorList>
            <person name="Wood V."/>
            <person name="Gwilliam R."/>
            <person name="Rajandream M.A."/>
            <person name="Lyne M.H."/>
            <person name="Lyne R."/>
            <person name="Stewart A."/>
            <person name="Sgouros J.G."/>
            <person name="Peat N."/>
            <person name="Hayles J."/>
            <person name="Baker S.G."/>
            <person name="Basham D."/>
            <person name="Bowman S."/>
            <person name="Brooks K."/>
            <person name="Brown D."/>
            <person name="Brown S."/>
            <person name="Chillingworth T."/>
            <person name="Churcher C.M."/>
            <person name="Collins M."/>
            <person name="Connor R."/>
            <person name="Cronin A."/>
            <person name="Davis P."/>
            <person name="Feltwell T."/>
            <person name="Fraser A."/>
            <person name="Gentles S."/>
            <person name="Goble A."/>
            <person name="Hamlin N."/>
            <person name="Harris D.E."/>
            <person name="Hidalgo J."/>
            <person name="Hodgson G."/>
            <person name="Holroyd S."/>
            <person name="Hornsby T."/>
            <person name="Howarth S."/>
            <person name="Huckle E.J."/>
            <person name="Hunt S."/>
            <person name="Jagels K."/>
            <person name="James K.D."/>
            <person name="Jones L."/>
            <person name="Jones M."/>
            <person name="Leather S."/>
            <person name="McDonald S."/>
            <person name="McLean J."/>
            <person name="Mooney P."/>
            <person name="Moule S."/>
            <person name="Mungall K.L."/>
            <person name="Murphy L.D."/>
            <person name="Niblett D."/>
            <person name="Odell C."/>
            <person name="Oliver K."/>
            <person name="O'Neil S."/>
            <person name="Pearson D."/>
            <person name="Quail M.A."/>
            <person name="Rabbinowitsch E."/>
            <person name="Rutherford K.M."/>
            <person name="Rutter S."/>
            <person name="Saunders D."/>
            <person name="Seeger K."/>
            <person name="Sharp S."/>
            <person name="Skelton J."/>
            <person name="Simmonds M.N."/>
            <person name="Squares R."/>
            <person name="Squares S."/>
            <person name="Stevens K."/>
            <person name="Taylor K."/>
            <person name="Taylor R.G."/>
            <person name="Tivey A."/>
            <person name="Walsh S.V."/>
            <person name="Warren T."/>
            <person name="Whitehead S."/>
            <person name="Woodward J.R."/>
            <person name="Volckaert G."/>
            <person name="Aert R."/>
            <person name="Robben J."/>
            <person name="Grymonprez B."/>
            <person name="Weltjens I."/>
            <person name="Vanstreels E."/>
            <person name="Rieger M."/>
            <person name="Schaefer M."/>
            <person name="Mueller-Auer S."/>
            <person name="Gabel C."/>
            <person name="Fuchs M."/>
            <person name="Duesterhoeft A."/>
            <person name="Fritzc C."/>
            <person name="Holzer E."/>
            <person name="Moestl D."/>
            <person name="Hilbert H."/>
            <person name="Borzym K."/>
            <person name="Langer I."/>
            <person name="Beck A."/>
            <person name="Lehrach H."/>
            <person name="Reinhardt R."/>
            <person name="Pohl T.M."/>
            <person name="Eger P."/>
            <person name="Zimmermann W."/>
            <person name="Wedler H."/>
            <person name="Wambutt R."/>
            <person name="Purnelle B."/>
            <person name="Goffeau A."/>
            <person name="Cadieu E."/>
            <person name="Dreano S."/>
            <person name="Gloux S."/>
            <person name="Lelaure V."/>
            <person name="Mottier S."/>
            <person name="Galibert F."/>
            <person name="Aves S.J."/>
            <person name="Xiang Z."/>
            <person name="Hunt C."/>
            <person name="Moore K."/>
            <person name="Hurst S.M."/>
            <person name="Lucas M."/>
            <person name="Rochet M."/>
            <person name="Gaillardin C."/>
            <person name="Tallada V.A."/>
            <person name="Garzon A."/>
            <person name="Thode G."/>
            <person name="Daga R.R."/>
            <person name="Cruzado L."/>
            <person name="Jimenez J."/>
            <person name="Sanchez M."/>
            <person name="del Rey F."/>
            <person name="Benito J."/>
            <person name="Dominguez A."/>
            <person name="Revuelta J.L."/>
            <person name="Moreno S."/>
            <person name="Armstrong J."/>
            <person name="Forsburg S.L."/>
            <person name="Cerutti L."/>
            <person name="Lowe T."/>
            <person name="McCombie W.R."/>
            <person name="Paulsen I."/>
            <person name="Potashkin J."/>
            <person name="Shpakovski G.V."/>
            <person name="Ussery D."/>
            <person name="Barrell B.G."/>
            <person name="Nurse P."/>
        </authorList>
    </citation>
    <scope>NUCLEOTIDE SEQUENCE [LARGE SCALE GENOMIC DNA]</scope>
    <source>
        <strain>972 / ATCC 24843</strain>
    </source>
</reference>
<organism>
    <name type="scientific">Schizosaccharomyces pombe (strain 972 / ATCC 24843)</name>
    <name type="common">Fission yeast</name>
    <dbReference type="NCBI Taxonomy" id="284812"/>
    <lineage>
        <taxon>Eukaryota</taxon>
        <taxon>Fungi</taxon>
        <taxon>Dikarya</taxon>
        <taxon>Ascomycota</taxon>
        <taxon>Taphrinomycotina</taxon>
        <taxon>Schizosaccharomycetes</taxon>
        <taxon>Schizosaccharomycetales</taxon>
        <taxon>Schizosaccharomycetaceae</taxon>
        <taxon>Schizosaccharomyces</taxon>
    </lineage>
</organism>
<accession>Q9UR06</accession>
<dbReference type="EMBL" id="CU329670">
    <property type="protein sequence ID" value="CAB63546.1"/>
    <property type="molecule type" value="Genomic_DNA"/>
</dbReference>
<dbReference type="PIR" id="T50060">
    <property type="entry name" value="T50060"/>
</dbReference>
<dbReference type="RefSeq" id="NP_595001.1">
    <property type="nucleotide sequence ID" value="NM_001020432.2"/>
</dbReference>
<dbReference type="SMR" id="Q9UR06"/>
<dbReference type="FunCoup" id="Q9UR06">
    <property type="interactions" value="272"/>
</dbReference>
<dbReference type="STRING" id="284812.Q9UR06"/>
<dbReference type="iPTMnet" id="Q9UR06"/>
<dbReference type="PaxDb" id="4896-SPAC1039.10.1"/>
<dbReference type="EnsemblFungi" id="SPAC1039.10.1">
    <property type="protein sequence ID" value="SPAC1039.10.1:pep"/>
    <property type="gene ID" value="SPAC1039.10"/>
</dbReference>
<dbReference type="PomBase" id="SPAC1039.10">
    <property type="gene designation" value="mmf2"/>
</dbReference>
<dbReference type="VEuPathDB" id="FungiDB:SPAC1039.10"/>
<dbReference type="eggNOG" id="KOG2317">
    <property type="taxonomic scope" value="Eukaryota"/>
</dbReference>
<dbReference type="HOGENOM" id="CLU_100715_7_3_1"/>
<dbReference type="InParanoid" id="Q9UR06"/>
<dbReference type="OMA" id="MNEVYID"/>
<dbReference type="PhylomeDB" id="Q9UR06"/>
<dbReference type="PRO" id="PR:Q9UR06"/>
<dbReference type="Proteomes" id="UP000002485">
    <property type="component" value="Chromosome I"/>
</dbReference>
<dbReference type="GO" id="GO:0005829">
    <property type="term" value="C:cytosol"/>
    <property type="evidence" value="ECO:0000318"/>
    <property type="project" value="GO_Central"/>
</dbReference>
<dbReference type="GO" id="GO:0005759">
    <property type="term" value="C:mitochondrial matrix"/>
    <property type="evidence" value="ECO:0000266"/>
    <property type="project" value="PomBase"/>
</dbReference>
<dbReference type="GO" id="GO:0005739">
    <property type="term" value="C:mitochondrion"/>
    <property type="evidence" value="ECO:0000318"/>
    <property type="project" value="GO_Central"/>
</dbReference>
<dbReference type="GO" id="GO:0019239">
    <property type="term" value="F:deaminase activity"/>
    <property type="evidence" value="ECO:0000318"/>
    <property type="project" value="GO_Central"/>
</dbReference>
<dbReference type="CDD" id="cd00448">
    <property type="entry name" value="YjgF_YER057c_UK114_family"/>
    <property type="match status" value="1"/>
</dbReference>
<dbReference type="FunFam" id="3.30.1330.40:FF:000001">
    <property type="entry name" value="L-PSP family endoribonuclease"/>
    <property type="match status" value="1"/>
</dbReference>
<dbReference type="Gene3D" id="3.30.1330.40">
    <property type="entry name" value="RutC-like"/>
    <property type="match status" value="1"/>
</dbReference>
<dbReference type="InterPro" id="IPR006056">
    <property type="entry name" value="RidA"/>
</dbReference>
<dbReference type="InterPro" id="IPR035959">
    <property type="entry name" value="RutC-like_sf"/>
</dbReference>
<dbReference type="InterPro" id="IPR006175">
    <property type="entry name" value="YjgF/YER057c/UK114"/>
</dbReference>
<dbReference type="NCBIfam" id="TIGR00004">
    <property type="entry name" value="Rid family detoxifying hydrolase"/>
    <property type="match status" value="1"/>
</dbReference>
<dbReference type="PANTHER" id="PTHR11803">
    <property type="entry name" value="2-IMINOBUTANOATE/2-IMINOPROPANOATE DEAMINASE RIDA"/>
    <property type="match status" value="1"/>
</dbReference>
<dbReference type="PANTHER" id="PTHR11803:SF58">
    <property type="entry name" value="PROTEIN HMF1-RELATED"/>
    <property type="match status" value="1"/>
</dbReference>
<dbReference type="Pfam" id="PF01042">
    <property type="entry name" value="Ribonuc_L-PSP"/>
    <property type="match status" value="1"/>
</dbReference>
<dbReference type="SUPFAM" id="SSF55298">
    <property type="entry name" value="YjgF-like"/>
    <property type="match status" value="1"/>
</dbReference>